<feature type="chain" id="PRO_0000156038" description="dCTP deaminase">
    <location>
        <begin position="1"/>
        <end position="155"/>
    </location>
</feature>
<feature type="binding site" evidence="1">
    <location>
        <begin position="79"/>
        <end position="84"/>
    </location>
    <ligand>
        <name>dCTP</name>
        <dbReference type="ChEBI" id="CHEBI:61481"/>
    </ligand>
</feature>
<feature type="binding site" evidence="1">
    <location>
        <position position="95"/>
    </location>
    <ligand>
        <name>dCTP</name>
        <dbReference type="ChEBI" id="CHEBI:61481"/>
    </ligand>
</feature>
<feature type="binding site" evidence="1">
    <location>
        <position position="124"/>
    </location>
    <ligand>
        <name>dCTP</name>
        <dbReference type="ChEBI" id="CHEBI:61481"/>
    </ligand>
</feature>
<feature type="binding site" evidence="1">
    <location>
        <position position="138"/>
    </location>
    <ligand>
        <name>dCTP</name>
        <dbReference type="ChEBI" id="CHEBI:61481"/>
    </ligand>
</feature>
<proteinExistence type="inferred from homology"/>
<comment type="function">
    <text evidence="1">Catalyzes the deamination of dCTP to dUTP.</text>
</comment>
<comment type="catalytic activity">
    <reaction evidence="1">
        <text>dCTP + H2O + H(+) = dUTP + NH4(+)</text>
        <dbReference type="Rhea" id="RHEA:22680"/>
        <dbReference type="ChEBI" id="CHEBI:15377"/>
        <dbReference type="ChEBI" id="CHEBI:15378"/>
        <dbReference type="ChEBI" id="CHEBI:28938"/>
        <dbReference type="ChEBI" id="CHEBI:61481"/>
        <dbReference type="ChEBI" id="CHEBI:61555"/>
        <dbReference type="EC" id="3.5.4.13"/>
    </reaction>
</comment>
<comment type="pathway">
    <text evidence="1">Pyrimidine metabolism; dUMP biosynthesis; dUMP from dCTP (dUTP route): step 1/2.</text>
</comment>
<comment type="subunit">
    <text evidence="1">Homotrimer.</text>
</comment>
<comment type="similarity">
    <text evidence="1">Belongs to the dCTP deaminase family.</text>
</comment>
<name>DCD_THEKO</name>
<evidence type="ECO:0000255" key="1">
    <source>
        <dbReference type="HAMAP-Rule" id="MF_00146"/>
    </source>
</evidence>
<sequence length="155" mass="17355">MMLPDWKIRKEILIEPFSEESLQPAGYDLRVGGEAYVNGKILDVKDSGGVTIPPKTYALVLTLERIKLPDDVMGDMKLRSSLAREGLIGSFAWVDPGWDGNLTLALFNASNESVELKYGERFVQIAFIRLEGPAKNPYRGNYQGSKHLALSKRKR</sequence>
<keyword id="KW-0378">Hydrolase</keyword>
<keyword id="KW-0546">Nucleotide metabolism</keyword>
<keyword id="KW-0547">Nucleotide-binding</keyword>
<keyword id="KW-1185">Reference proteome</keyword>
<gene>
    <name evidence="1" type="primary">dcd</name>
    <name type="ordered locus">TK1414</name>
</gene>
<dbReference type="EC" id="3.5.4.13" evidence="1"/>
<dbReference type="EMBL" id="AP006878">
    <property type="protein sequence ID" value="BAD85603.1"/>
    <property type="molecule type" value="Genomic_DNA"/>
</dbReference>
<dbReference type="RefSeq" id="WP_011250365.1">
    <property type="nucleotide sequence ID" value="NC_006624.1"/>
</dbReference>
<dbReference type="SMR" id="Q5JH10"/>
<dbReference type="FunCoup" id="Q5JH10">
    <property type="interactions" value="22"/>
</dbReference>
<dbReference type="STRING" id="69014.TK1414"/>
<dbReference type="EnsemblBacteria" id="BAD85603">
    <property type="protein sequence ID" value="BAD85603"/>
    <property type="gene ID" value="TK1414"/>
</dbReference>
<dbReference type="GeneID" id="78447934"/>
<dbReference type="KEGG" id="tko:TK1414"/>
<dbReference type="PATRIC" id="fig|69014.16.peg.1376"/>
<dbReference type="eggNOG" id="arCOG04048">
    <property type="taxonomic scope" value="Archaea"/>
</dbReference>
<dbReference type="HOGENOM" id="CLU_087476_3_1_2"/>
<dbReference type="InParanoid" id="Q5JH10"/>
<dbReference type="OrthoDB" id="33242at2157"/>
<dbReference type="PhylomeDB" id="Q5JH10"/>
<dbReference type="UniPathway" id="UPA00610">
    <property type="reaction ID" value="UER00665"/>
</dbReference>
<dbReference type="Proteomes" id="UP000000536">
    <property type="component" value="Chromosome"/>
</dbReference>
<dbReference type="GO" id="GO:0008829">
    <property type="term" value="F:dCTP deaminase activity"/>
    <property type="evidence" value="ECO:0007669"/>
    <property type="project" value="UniProtKB-UniRule"/>
</dbReference>
<dbReference type="GO" id="GO:0000166">
    <property type="term" value="F:nucleotide binding"/>
    <property type="evidence" value="ECO:0007669"/>
    <property type="project" value="UniProtKB-KW"/>
</dbReference>
<dbReference type="GO" id="GO:0006226">
    <property type="term" value="P:dUMP biosynthetic process"/>
    <property type="evidence" value="ECO:0007669"/>
    <property type="project" value="UniProtKB-UniPathway"/>
</dbReference>
<dbReference type="GO" id="GO:0006229">
    <property type="term" value="P:dUTP biosynthetic process"/>
    <property type="evidence" value="ECO:0007669"/>
    <property type="project" value="UniProtKB-UniRule"/>
</dbReference>
<dbReference type="CDD" id="cd07557">
    <property type="entry name" value="trimeric_dUTPase"/>
    <property type="match status" value="1"/>
</dbReference>
<dbReference type="Gene3D" id="2.70.40.10">
    <property type="match status" value="1"/>
</dbReference>
<dbReference type="HAMAP" id="MF_00146">
    <property type="entry name" value="dCTP_deaminase"/>
    <property type="match status" value="1"/>
</dbReference>
<dbReference type="InterPro" id="IPR011962">
    <property type="entry name" value="dCTP_deaminase"/>
</dbReference>
<dbReference type="InterPro" id="IPR036157">
    <property type="entry name" value="dUTPase-like_sf"/>
</dbReference>
<dbReference type="InterPro" id="IPR033704">
    <property type="entry name" value="dUTPase_trimeric"/>
</dbReference>
<dbReference type="NCBIfam" id="TIGR02274">
    <property type="entry name" value="dCTP_deam"/>
    <property type="match status" value="1"/>
</dbReference>
<dbReference type="PANTHER" id="PTHR42680">
    <property type="entry name" value="DCTP DEAMINASE"/>
    <property type="match status" value="1"/>
</dbReference>
<dbReference type="PANTHER" id="PTHR42680:SF3">
    <property type="entry name" value="DCTP DEAMINASE"/>
    <property type="match status" value="1"/>
</dbReference>
<dbReference type="Pfam" id="PF22769">
    <property type="entry name" value="DCD"/>
    <property type="match status" value="1"/>
</dbReference>
<dbReference type="SUPFAM" id="SSF51283">
    <property type="entry name" value="dUTPase-like"/>
    <property type="match status" value="1"/>
</dbReference>
<protein>
    <recommendedName>
        <fullName evidence="1">dCTP deaminase</fullName>
        <ecNumber evidence="1">3.5.4.13</ecNumber>
    </recommendedName>
    <alternativeName>
        <fullName evidence="1">Deoxycytidine triphosphate deaminase</fullName>
    </alternativeName>
</protein>
<accession>Q5JH10</accession>
<reference key="1">
    <citation type="journal article" date="2005" name="Genome Res.">
        <title>Complete genome sequence of the hyperthermophilic archaeon Thermococcus kodakaraensis KOD1 and comparison with Pyrococcus genomes.</title>
        <authorList>
            <person name="Fukui T."/>
            <person name="Atomi H."/>
            <person name="Kanai T."/>
            <person name="Matsumi R."/>
            <person name="Fujiwara S."/>
            <person name="Imanaka T."/>
        </authorList>
    </citation>
    <scope>NUCLEOTIDE SEQUENCE [LARGE SCALE GENOMIC DNA]</scope>
    <source>
        <strain>ATCC BAA-918 / JCM 12380 / KOD1</strain>
    </source>
</reference>
<organism>
    <name type="scientific">Thermococcus kodakarensis (strain ATCC BAA-918 / JCM 12380 / KOD1)</name>
    <name type="common">Pyrococcus kodakaraensis (strain KOD1)</name>
    <dbReference type="NCBI Taxonomy" id="69014"/>
    <lineage>
        <taxon>Archaea</taxon>
        <taxon>Methanobacteriati</taxon>
        <taxon>Methanobacteriota</taxon>
        <taxon>Thermococci</taxon>
        <taxon>Thermococcales</taxon>
        <taxon>Thermococcaceae</taxon>
        <taxon>Thermococcus</taxon>
    </lineage>
</organism>